<evidence type="ECO:0000255" key="1">
    <source>
        <dbReference type="HAMAP-Rule" id="MF_00147"/>
    </source>
</evidence>
<sequence length="253" mass="27262">MRTPIIAGNWKMNKTVQEAKDFVNALPTLPDSKEVESVICAPAIQLDALTTAVKEGKAQGLEIGAQNTYFEDNGAFTGETSPVALADLGVKYVVIGHSERRELFHETDEEINKKAHAIFKHGMTPIICVGETDEERESGKANDVVGEQVKKAVAGLSEDQLKSVVIAYEPIWAIGTGKSSTSEDANEMCAFVRQTIADLSSKEVSEATRIQYGGSVKPNNIKEYMAQTDIDGALVGGASLKVEDFVQLLEGAK</sequence>
<dbReference type="EC" id="5.3.1.1" evidence="1"/>
<dbReference type="EMBL" id="CP000046">
    <property type="protein sequence ID" value="AAW36396.1"/>
    <property type="molecule type" value="Genomic_DNA"/>
</dbReference>
<dbReference type="RefSeq" id="WP_001260089.1">
    <property type="nucleotide sequence ID" value="NZ_JBGOFO010000005.1"/>
</dbReference>
<dbReference type="SMR" id="Q5HHP3"/>
<dbReference type="KEGG" id="sac:SACOL0840"/>
<dbReference type="HOGENOM" id="CLU_024251_2_3_9"/>
<dbReference type="UniPathway" id="UPA00109">
    <property type="reaction ID" value="UER00189"/>
</dbReference>
<dbReference type="UniPathway" id="UPA00138"/>
<dbReference type="Proteomes" id="UP000000530">
    <property type="component" value="Chromosome"/>
</dbReference>
<dbReference type="GO" id="GO:0005829">
    <property type="term" value="C:cytosol"/>
    <property type="evidence" value="ECO:0007669"/>
    <property type="project" value="TreeGrafter"/>
</dbReference>
<dbReference type="GO" id="GO:0004807">
    <property type="term" value="F:triose-phosphate isomerase activity"/>
    <property type="evidence" value="ECO:0007669"/>
    <property type="project" value="UniProtKB-UniRule"/>
</dbReference>
<dbReference type="GO" id="GO:0006094">
    <property type="term" value="P:gluconeogenesis"/>
    <property type="evidence" value="ECO:0007669"/>
    <property type="project" value="UniProtKB-UniRule"/>
</dbReference>
<dbReference type="GO" id="GO:0046166">
    <property type="term" value="P:glyceraldehyde-3-phosphate biosynthetic process"/>
    <property type="evidence" value="ECO:0007669"/>
    <property type="project" value="TreeGrafter"/>
</dbReference>
<dbReference type="GO" id="GO:0019563">
    <property type="term" value="P:glycerol catabolic process"/>
    <property type="evidence" value="ECO:0007669"/>
    <property type="project" value="TreeGrafter"/>
</dbReference>
<dbReference type="GO" id="GO:0006096">
    <property type="term" value="P:glycolytic process"/>
    <property type="evidence" value="ECO:0007669"/>
    <property type="project" value="UniProtKB-UniRule"/>
</dbReference>
<dbReference type="CDD" id="cd00311">
    <property type="entry name" value="TIM"/>
    <property type="match status" value="1"/>
</dbReference>
<dbReference type="FunFam" id="3.20.20.70:FF:000016">
    <property type="entry name" value="Triosephosphate isomerase"/>
    <property type="match status" value="1"/>
</dbReference>
<dbReference type="Gene3D" id="3.20.20.70">
    <property type="entry name" value="Aldolase class I"/>
    <property type="match status" value="1"/>
</dbReference>
<dbReference type="HAMAP" id="MF_00147_B">
    <property type="entry name" value="TIM_B"/>
    <property type="match status" value="1"/>
</dbReference>
<dbReference type="InterPro" id="IPR013785">
    <property type="entry name" value="Aldolase_TIM"/>
</dbReference>
<dbReference type="InterPro" id="IPR035990">
    <property type="entry name" value="TIM_sf"/>
</dbReference>
<dbReference type="InterPro" id="IPR022896">
    <property type="entry name" value="TrioseP_Isoase_bac/euk"/>
</dbReference>
<dbReference type="InterPro" id="IPR000652">
    <property type="entry name" value="Triosephosphate_isomerase"/>
</dbReference>
<dbReference type="InterPro" id="IPR020861">
    <property type="entry name" value="Triosephosphate_isomerase_AS"/>
</dbReference>
<dbReference type="NCBIfam" id="TIGR00419">
    <property type="entry name" value="tim"/>
    <property type="match status" value="1"/>
</dbReference>
<dbReference type="PANTHER" id="PTHR21139">
    <property type="entry name" value="TRIOSEPHOSPHATE ISOMERASE"/>
    <property type="match status" value="1"/>
</dbReference>
<dbReference type="PANTHER" id="PTHR21139:SF42">
    <property type="entry name" value="TRIOSEPHOSPHATE ISOMERASE"/>
    <property type="match status" value="1"/>
</dbReference>
<dbReference type="Pfam" id="PF00121">
    <property type="entry name" value="TIM"/>
    <property type="match status" value="1"/>
</dbReference>
<dbReference type="SUPFAM" id="SSF51351">
    <property type="entry name" value="Triosephosphate isomerase (TIM)"/>
    <property type="match status" value="1"/>
</dbReference>
<dbReference type="PROSITE" id="PS00171">
    <property type="entry name" value="TIM_1"/>
    <property type="match status" value="1"/>
</dbReference>
<dbReference type="PROSITE" id="PS51440">
    <property type="entry name" value="TIM_2"/>
    <property type="match status" value="1"/>
</dbReference>
<organism>
    <name type="scientific">Staphylococcus aureus (strain COL)</name>
    <dbReference type="NCBI Taxonomy" id="93062"/>
    <lineage>
        <taxon>Bacteria</taxon>
        <taxon>Bacillati</taxon>
        <taxon>Bacillota</taxon>
        <taxon>Bacilli</taxon>
        <taxon>Bacillales</taxon>
        <taxon>Staphylococcaceae</taxon>
        <taxon>Staphylococcus</taxon>
    </lineage>
</organism>
<keyword id="KW-0963">Cytoplasm</keyword>
<keyword id="KW-0312">Gluconeogenesis</keyword>
<keyword id="KW-0324">Glycolysis</keyword>
<keyword id="KW-0413">Isomerase</keyword>
<protein>
    <recommendedName>
        <fullName evidence="1">Triosephosphate isomerase</fullName>
        <shortName evidence="1">TIM</shortName>
        <shortName evidence="1">TPI</shortName>
        <ecNumber evidence="1">5.3.1.1</ecNumber>
    </recommendedName>
    <alternativeName>
        <fullName evidence="1">Triose-phosphate isomerase</fullName>
    </alternativeName>
</protein>
<reference key="1">
    <citation type="journal article" date="2005" name="J. Bacteriol.">
        <title>Insights on evolution of virulence and resistance from the complete genome analysis of an early methicillin-resistant Staphylococcus aureus strain and a biofilm-producing methicillin-resistant Staphylococcus epidermidis strain.</title>
        <authorList>
            <person name="Gill S.R."/>
            <person name="Fouts D.E."/>
            <person name="Archer G.L."/>
            <person name="Mongodin E.F."/>
            <person name="DeBoy R.T."/>
            <person name="Ravel J."/>
            <person name="Paulsen I.T."/>
            <person name="Kolonay J.F."/>
            <person name="Brinkac L.M."/>
            <person name="Beanan M.J."/>
            <person name="Dodson R.J."/>
            <person name="Daugherty S.C."/>
            <person name="Madupu R."/>
            <person name="Angiuoli S.V."/>
            <person name="Durkin A.S."/>
            <person name="Haft D.H."/>
            <person name="Vamathevan J.J."/>
            <person name="Khouri H."/>
            <person name="Utterback T.R."/>
            <person name="Lee C."/>
            <person name="Dimitrov G."/>
            <person name="Jiang L."/>
            <person name="Qin H."/>
            <person name="Weidman J."/>
            <person name="Tran K."/>
            <person name="Kang K.H."/>
            <person name="Hance I.R."/>
            <person name="Nelson K.E."/>
            <person name="Fraser C.M."/>
        </authorList>
    </citation>
    <scope>NUCLEOTIDE SEQUENCE [LARGE SCALE GENOMIC DNA]</scope>
    <source>
        <strain>COL</strain>
    </source>
</reference>
<name>TPIS_STAAC</name>
<comment type="function">
    <text evidence="1">Involved in the gluconeogenesis. Catalyzes stereospecifically the conversion of dihydroxyacetone phosphate (DHAP) to D-glyceraldehyde-3-phosphate (G3P).</text>
</comment>
<comment type="catalytic activity">
    <reaction evidence="1">
        <text>D-glyceraldehyde 3-phosphate = dihydroxyacetone phosphate</text>
        <dbReference type="Rhea" id="RHEA:18585"/>
        <dbReference type="ChEBI" id="CHEBI:57642"/>
        <dbReference type="ChEBI" id="CHEBI:59776"/>
        <dbReference type="EC" id="5.3.1.1"/>
    </reaction>
</comment>
<comment type="pathway">
    <text evidence="1">Carbohydrate biosynthesis; gluconeogenesis.</text>
</comment>
<comment type="pathway">
    <text evidence="1">Carbohydrate degradation; glycolysis; D-glyceraldehyde 3-phosphate from glycerone phosphate: step 1/1.</text>
</comment>
<comment type="subunit">
    <text evidence="1">Homodimer.</text>
</comment>
<comment type="subcellular location">
    <subcellularLocation>
        <location evidence="1">Cytoplasm</location>
    </subcellularLocation>
</comment>
<comment type="similarity">
    <text evidence="1">Belongs to the triosephosphate isomerase family.</text>
</comment>
<gene>
    <name evidence="1" type="primary">tpiA</name>
    <name type="ordered locus">SACOL0840</name>
</gene>
<accession>Q5HHP3</accession>
<proteinExistence type="inferred from homology"/>
<feature type="chain" id="PRO_0000090283" description="Triosephosphate isomerase">
    <location>
        <begin position="1"/>
        <end position="253"/>
    </location>
</feature>
<feature type="active site" description="Electrophile" evidence="1">
    <location>
        <position position="97"/>
    </location>
</feature>
<feature type="active site" description="Proton acceptor" evidence="1">
    <location>
        <position position="169"/>
    </location>
</feature>
<feature type="binding site" evidence="1">
    <location>
        <begin position="9"/>
        <end position="11"/>
    </location>
    <ligand>
        <name>substrate</name>
    </ligand>
</feature>
<feature type="binding site" evidence="1">
    <location>
        <position position="175"/>
    </location>
    <ligand>
        <name>substrate</name>
    </ligand>
</feature>
<feature type="binding site" evidence="1">
    <location>
        <position position="215"/>
    </location>
    <ligand>
        <name>substrate</name>
    </ligand>
</feature>
<feature type="binding site" evidence="1">
    <location>
        <begin position="236"/>
        <end position="237"/>
    </location>
    <ligand>
        <name>substrate</name>
    </ligand>
</feature>